<proteinExistence type="evidence at protein level"/>
<name>SH3G3_DROME</name>
<gene>
    <name evidence="17" type="primary">EndoA</name>
    <name evidence="11" type="synonym">endo</name>
    <name evidence="17" type="ORF">CG14296</name>
</gene>
<accession>Q8T390</accession>
<accession>Q95V65</accession>
<accession>Q9VE25</accession>
<comment type="function">
    <text evidence="6 7">Required presynaptically at the neuromuscular junction. Implicated in synaptic vesicle endocytosis.</text>
</comment>
<comment type="interaction">
    <interactant intactId="EBI-150782">
        <id>Q8T390</id>
    </interactant>
    <interactant intactId="EBI-156726">
        <id>Q9VE96</id>
        <label>l(3)05822</label>
    </interactant>
    <organismsDiffer>false</organismsDiffer>
    <experiments>3</experiments>
</comment>
<comment type="subcellular location">
    <subcellularLocation>
        <location evidence="6 7">Cytoplasm</location>
    </subcellularLocation>
    <subcellularLocation>
        <location evidence="6 7">Membrane</location>
        <topology evidence="6 7">Peripheral membrane protein</topology>
    </subcellularLocation>
    <text evidence="6 7">Associated with internal membranes. Expressed presynaptically at NMJs.</text>
</comment>
<comment type="tissue specificity">
    <text evidence="6 7">Expression is abundant in central nervous system (brain lobes and the ventral nerve cord) starting at embryonic stage 13 through to third instar larvae. Also expressed in photoreceptors in the eye imaginal disks and the Bolwig organs of the peripheral nervous system.</text>
</comment>
<comment type="RNA editing">
    <location>
        <position position="129" evidence="7 8 10"/>
    </location>
    <location>
        <position position="137" evidence="8"/>
    </location>
    <text evidence="8">Partially edited. Target of Adar.</text>
</comment>
<comment type="disruption phenotype">
    <text evidence="7">Dramatic impairment of clathrin-mediated endocytosis, severe defects in motility and death at the early L2 larval stage.</text>
</comment>
<comment type="similarity">
    <text evidence="1">Belongs to the endophilin family.</text>
</comment>
<feature type="chain" id="PRO_0000285838" description="Endophilin-A">
    <location>
        <begin position="1"/>
        <end position="369"/>
    </location>
</feature>
<feature type="domain" description="BAR" evidence="3">
    <location>
        <begin position="18"/>
        <end position="248"/>
    </location>
</feature>
<feature type="domain" description="SH3" evidence="2">
    <location>
        <begin position="305"/>
        <end position="364"/>
    </location>
</feature>
<feature type="region of interest" description="Disordered" evidence="4">
    <location>
        <begin position="266"/>
        <end position="295"/>
    </location>
</feature>
<feature type="coiled-coil region" evidence="1">
    <location>
        <begin position="227"/>
        <end position="247"/>
    </location>
</feature>
<feature type="compositionally biased region" description="Low complexity" evidence="4">
    <location>
        <begin position="277"/>
        <end position="294"/>
    </location>
</feature>
<feature type="modified residue" description="Phosphoserine" evidence="9">
    <location>
        <position position="285"/>
    </location>
</feature>
<feature type="modified residue" description="Phosphoserine" evidence="9">
    <location>
        <position position="289"/>
    </location>
</feature>
<feature type="modified residue" description="Phosphoserine" evidence="9">
    <location>
        <position position="293"/>
    </location>
</feature>
<feature type="sequence variant" description="In RNA edited version." evidence="7 8">
    <original>K</original>
    <variation>R</variation>
    <location>
        <position position="129"/>
    </location>
</feature>
<feature type="sequence variant" description="In RNA edited version." evidence="8">
    <original>K</original>
    <variation>E</variation>
    <location>
        <position position="137"/>
    </location>
</feature>
<evidence type="ECO:0000255" key="1"/>
<evidence type="ECO:0000255" key="2">
    <source>
        <dbReference type="PROSITE-ProRule" id="PRU00192"/>
    </source>
</evidence>
<evidence type="ECO:0000255" key="3">
    <source>
        <dbReference type="PROSITE-ProRule" id="PRU00361"/>
    </source>
</evidence>
<evidence type="ECO:0000256" key="4">
    <source>
        <dbReference type="SAM" id="MobiDB-lite"/>
    </source>
</evidence>
<evidence type="ECO:0000269" key="5">
    <source>
    </source>
</evidence>
<evidence type="ECO:0000269" key="6">
    <source>
    </source>
</evidence>
<evidence type="ECO:0000269" key="7">
    <source>
    </source>
</evidence>
<evidence type="ECO:0000269" key="8">
    <source>
    </source>
</evidence>
<evidence type="ECO:0000269" key="9">
    <source>
    </source>
</evidence>
<evidence type="ECO:0000269" key="10">
    <source ref="5"/>
</evidence>
<evidence type="ECO:0000303" key="11">
    <source>
    </source>
</evidence>
<evidence type="ECO:0000305" key="12"/>
<evidence type="ECO:0000312" key="13">
    <source>
        <dbReference type="EMBL" id="AAF55606.2"/>
    </source>
</evidence>
<evidence type="ECO:0000312" key="14">
    <source>
        <dbReference type="EMBL" id="AAL24818.1"/>
    </source>
</evidence>
<evidence type="ECO:0000312" key="15">
    <source>
        <dbReference type="EMBL" id="AAO25060.1"/>
    </source>
</evidence>
<evidence type="ECO:0000312" key="16">
    <source>
        <dbReference type="EMBL" id="CAD24682.1"/>
    </source>
</evidence>
<evidence type="ECO:0000312" key="17">
    <source>
        <dbReference type="FlyBase" id="FBgn0038659"/>
    </source>
</evidence>
<organism>
    <name type="scientific">Drosophila melanogaster</name>
    <name type="common">Fruit fly</name>
    <dbReference type="NCBI Taxonomy" id="7227"/>
    <lineage>
        <taxon>Eukaryota</taxon>
        <taxon>Metazoa</taxon>
        <taxon>Ecdysozoa</taxon>
        <taxon>Arthropoda</taxon>
        <taxon>Hexapoda</taxon>
        <taxon>Insecta</taxon>
        <taxon>Pterygota</taxon>
        <taxon>Neoptera</taxon>
        <taxon>Endopterygota</taxon>
        <taxon>Diptera</taxon>
        <taxon>Brachycera</taxon>
        <taxon>Muscomorpha</taxon>
        <taxon>Ephydroidea</taxon>
        <taxon>Drosophilidae</taxon>
        <taxon>Drosophila</taxon>
        <taxon>Sophophora</taxon>
    </lineage>
</organism>
<keyword id="KW-0175">Coiled coil</keyword>
<keyword id="KW-0963">Cytoplasm</keyword>
<keyword id="KW-0254">Endocytosis</keyword>
<keyword id="KW-0472">Membrane</keyword>
<keyword id="KW-0597">Phosphoprotein</keyword>
<keyword id="KW-1185">Reference proteome</keyword>
<keyword id="KW-0691">RNA editing</keyword>
<keyword id="KW-0728">SH3 domain</keyword>
<protein>
    <recommendedName>
        <fullName>Endophilin-A</fullName>
    </recommendedName>
    <alternativeName>
        <fullName>SH3 domain-containing GRB2-like protein</fullName>
    </alternativeName>
</protein>
<reference evidence="12 14" key="1">
    <citation type="journal article" date="2002" name="Cell">
        <title>Endophilin mutations block clathrin-mediated endocytosis but not neurotransmitter release.</title>
        <authorList>
            <person name="Verstreken P."/>
            <person name="Kjaerulff O."/>
            <person name="Lloyd T.E."/>
            <person name="Atkinson R."/>
            <person name="Zhou Y."/>
            <person name="Meinertzhagen I.A."/>
            <person name="Bellen H.J."/>
        </authorList>
    </citation>
    <scope>NUCLEOTIDE SEQUENCE [MRNA]</scope>
    <scope>FUNCTION</scope>
    <scope>SUBCELLULAR LOCATION</scope>
    <scope>TISSUE SPECIFICITY</scope>
    <scope>RNA EDITING OF POSITION 129</scope>
    <scope>DISRUPTION PHENOTYPE</scope>
    <source>
        <strain evidence="7">Berkeley</strain>
        <tissue evidence="7">Head</tissue>
    </source>
</reference>
<reference evidence="12 16" key="2">
    <citation type="journal article" date="2002" name="EMBO J.">
        <title>Essential role of endophilin A in synaptic vesicle budding at the Drosophila neuromuscular junction.</title>
        <authorList>
            <person name="Guichet A."/>
            <person name="Wucherpfennig T."/>
            <person name="Dudu V."/>
            <person name="Etter S."/>
            <person name="Wilsch-Brauniger M."/>
            <person name="Hellwig A."/>
            <person name="Gonzalez-Gaitan M."/>
            <person name="Huttner W.B."/>
            <person name="Schmidt A.A."/>
        </authorList>
    </citation>
    <scope>NUCLEOTIDE SEQUENCE [MRNA]</scope>
    <scope>FUNCTION</scope>
    <scope>SUBCELLULAR LOCATION</scope>
    <scope>TISSUE SPECIFICITY</scope>
    <source>
        <strain evidence="6">Berkeley</strain>
        <tissue evidence="16">Head</tissue>
    </source>
</reference>
<reference evidence="13" key="3">
    <citation type="journal article" date="2000" name="Science">
        <title>The genome sequence of Drosophila melanogaster.</title>
        <authorList>
            <person name="Adams M.D."/>
            <person name="Celniker S.E."/>
            <person name="Holt R.A."/>
            <person name="Evans C.A."/>
            <person name="Gocayne J.D."/>
            <person name="Amanatides P.G."/>
            <person name="Scherer S.E."/>
            <person name="Li P.W."/>
            <person name="Hoskins R.A."/>
            <person name="Galle R.F."/>
            <person name="George R.A."/>
            <person name="Lewis S.E."/>
            <person name="Richards S."/>
            <person name="Ashburner M."/>
            <person name="Henderson S.N."/>
            <person name="Sutton G.G."/>
            <person name="Wortman J.R."/>
            <person name="Yandell M.D."/>
            <person name="Zhang Q."/>
            <person name="Chen L.X."/>
            <person name="Brandon R.C."/>
            <person name="Rogers Y.-H.C."/>
            <person name="Blazej R.G."/>
            <person name="Champe M."/>
            <person name="Pfeiffer B.D."/>
            <person name="Wan K.H."/>
            <person name="Doyle C."/>
            <person name="Baxter E.G."/>
            <person name="Helt G."/>
            <person name="Nelson C.R."/>
            <person name="Miklos G.L.G."/>
            <person name="Abril J.F."/>
            <person name="Agbayani A."/>
            <person name="An H.-J."/>
            <person name="Andrews-Pfannkoch C."/>
            <person name="Baldwin D."/>
            <person name="Ballew R.M."/>
            <person name="Basu A."/>
            <person name="Baxendale J."/>
            <person name="Bayraktaroglu L."/>
            <person name="Beasley E.M."/>
            <person name="Beeson K.Y."/>
            <person name="Benos P.V."/>
            <person name="Berman B.P."/>
            <person name="Bhandari D."/>
            <person name="Bolshakov S."/>
            <person name="Borkova D."/>
            <person name="Botchan M.R."/>
            <person name="Bouck J."/>
            <person name="Brokstein P."/>
            <person name="Brottier P."/>
            <person name="Burtis K.C."/>
            <person name="Busam D.A."/>
            <person name="Butler H."/>
            <person name="Cadieu E."/>
            <person name="Center A."/>
            <person name="Chandra I."/>
            <person name="Cherry J.M."/>
            <person name="Cawley S."/>
            <person name="Dahlke C."/>
            <person name="Davenport L.B."/>
            <person name="Davies P."/>
            <person name="de Pablos B."/>
            <person name="Delcher A."/>
            <person name="Deng Z."/>
            <person name="Mays A.D."/>
            <person name="Dew I."/>
            <person name="Dietz S.M."/>
            <person name="Dodson K."/>
            <person name="Doup L.E."/>
            <person name="Downes M."/>
            <person name="Dugan-Rocha S."/>
            <person name="Dunkov B.C."/>
            <person name="Dunn P."/>
            <person name="Durbin K.J."/>
            <person name="Evangelista C.C."/>
            <person name="Ferraz C."/>
            <person name="Ferriera S."/>
            <person name="Fleischmann W."/>
            <person name="Fosler C."/>
            <person name="Gabrielian A.E."/>
            <person name="Garg N.S."/>
            <person name="Gelbart W.M."/>
            <person name="Glasser K."/>
            <person name="Glodek A."/>
            <person name="Gong F."/>
            <person name="Gorrell J.H."/>
            <person name="Gu Z."/>
            <person name="Guan P."/>
            <person name="Harris M."/>
            <person name="Harris N.L."/>
            <person name="Harvey D.A."/>
            <person name="Heiman T.J."/>
            <person name="Hernandez J.R."/>
            <person name="Houck J."/>
            <person name="Hostin D."/>
            <person name="Houston K.A."/>
            <person name="Howland T.J."/>
            <person name="Wei M.-H."/>
            <person name="Ibegwam C."/>
            <person name="Jalali M."/>
            <person name="Kalush F."/>
            <person name="Karpen G.H."/>
            <person name="Ke Z."/>
            <person name="Kennison J.A."/>
            <person name="Ketchum K.A."/>
            <person name="Kimmel B.E."/>
            <person name="Kodira C.D."/>
            <person name="Kraft C.L."/>
            <person name="Kravitz S."/>
            <person name="Kulp D."/>
            <person name="Lai Z."/>
            <person name="Lasko P."/>
            <person name="Lei Y."/>
            <person name="Levitsky A.A."/>
            <person name="Li J.H."/>
            <person name="Li Z."/>
            <person name="Liang Y."/>
            <person name="Lin X."/>
            <person name="Liu X."/>
            <person name="Mattei B."/>
            <person name="McIntosh T.C."/>
            <person name="McLeod M.P."/>
            <person name="McPherson D."/>
            <person name="Merkulov G."/>
            <person name="Milshina N.V."/>
            <person name="Mobarry C."/>
            <person name="Morris J."/>
            <person name="Moshrefi A."/>
            <person name="Mount S.M."/>
            <person name="Moy M."/>
            <person name="Murphy B."/>
            <person name="Murphy L."/>
            <person name="Muzny D.M."/>
            <person name="Nelson D.L."/>
            <person name="Nelson D.R."/>
            <person name="Nelson K.A."/>
            <person name="Nixon K."/>
            <person name="Nusskern D.R."/>
            <person name="Pacleb J.M."/>
            <person name="Palazzolo M."/>
            <person name="Pittman G.S."/>
            <person name="Pan S."/>
            <person name="Pollard J."/>
            <person name="Puri V."/>
            <person name="Reese M.G."/>
            <person name="Reinert K."/>
            <person name="Remington K."/>
            <person name="Saunders R.D.C."/>
            <person name="Scheeler F."/>
            <person name="Shen H."/>
            <person name="Shue B.C."/>
            <person name="Siden-Kiamos I."/>
            <person name="Simpson M."/>
            <person name="Skupski M.P."/>
            <person name="Smith T.J."/>
            <person name="Spier E."/>
            <person name="Spradling A.C."/>
            <person name="Stapleton M."/>
            <person name="Strong R."/>
            <person name="Sun E."/>
            <person name="Svirskas R."/>
            <person name="Tector C."/>
            <person name="Turner R."/>
            <person name="Venter E."/>
            <person name="Wang A.H."/>
            <person name="Wang X."/>
            <person name="Wang Z.-Y."/>
            <person name="Wassarman D.A."/>
            <person name="Weinstock G.M."/>
            <person name="Weissenbach J."/>
            <person name="Williams S.M."/>
            <person name="Woodage T."/>
            <person name="Worley K.C."/>
            <person name="Wu D."/>
            <person name="Yang S."/>
            <person name="Yao Q.A."/>
            <person name="Ye J."/>
            <person name="Yeh R.-F."/>
            <person name="Zaveri J.S."/>
            <person name="Zhan M."/>
            <person name="Zhang G."/>
            <person name="Zhao Q."/>
            <person name="Zheng L."/>
            <person name="Zheng X.H."/>
            <person name="Zhong F.N."/>
            <person name="Zhong W."/>
            <person name="Zhou X."/>
            <person name="Zhu S.C."/>
            <person name="Zhu X."/>
            <person name="Smith H.O."/>
            <person name="Gibbs R.A."/>
            <person name="Myers E.W."/>
            <person name="Rubin G.M."/>
            <person name="Venter J.C."/>
        </authorList>
    </citation>
    <scope>NUCLEOTIDE SEQUENCE [LARGE SCALE GENOMIC DNA]</scope>
    <source>
        <strain evidence="5">Berkeley</strain>
    </source>
</reference>
<reference evidence="12 13" key="4">
    <citation type="journal article" date="2002" name="Genome Biol.">
        <title>Annotation of the Drosophila melanogaster euchromatic genome: a systematic review.</title>
        <authorList>
            <person name="Misra S."/>
            <person name="Crosby M.A."/>
            <person name="Mungall C.J."/>
            <person name="Matthews B.B."/>
            <person name="Campbell K.S."/>
            <person name="Hradecky P."/>
            <person name="Huang Y."/>
            <person name="Kaminker J.S."/>
            <person name="Millburn G.H."/>
            <person name="Prochnik S.E."/>
            <person name="Smith C.D."/>
            <person name="Tupy J.L."/>
            <person name="Whitfield E.J."/>
            <person name="Bayraktaroglu L."/>
            <person name="Berman B.P."/>
            <person name="Bettencourt B.R."/>
            <person name="Celniker S.E."/>
            <person name="de Grey A.D.N.J."/>
            <person name="Drysdale R.A."/>
            <person name="Harris N.L."/>
            <person name="Richter J."/>
            <person name="Russo S."/>
            <person name="Schroeder A.J."/>
            <person name="Shu S.Q."/>
            <person name="Stapleton M."/>
            <person name="Yamada C."/>
            <person name="Ashburner M."/>
            <person name="Gelbart W.M."/>
            <person name="Rubin G.M."/>
            <person name="Lewis S.E."/>
        </authorList>
    </citation>
    <scope>GENOME REANNOTATION</scope>
    <source>
        <strain>Berkeley</strain>
    </source>
</reference>
<reference evidence="12 15" key="5">
    <citation type="submission" date="2003-01" db="EMBL/GenBank/DDBJ databases">
        <authorList>
            <person name="Stapleton M."/>
            <person name="Brokstein P."/>
            <person name="Hong L."/>
            <person name="Agbayani A."/>
            <person name="Carlson J.W."/>
            <person name="Champe M."/>
            <person name="Chavez C."/>
            <person name="Dorsett V."/>
            <person name="Dresnek D."/>
            <person name="Farfan D."/>
            <person name="Frise E."/>
            <person name="George R.A."/>
            <person name="Gonzalez M."/>
            <person name="Guarin H."/>
            <person name="Kronmiller B."/>
            <person name="Li P.W."/>
            <person name="Liao G."/>
            <person name="Miranda A."/>
            <person name="Mungall C.J."/>
            <person name="Nunoo J."/>
            <person name="Pacleb J.M."/>
            <person name="Paragas V."/>
            <person name="Park S."/>
            <person name="Patel S."/>
            <person name="Phouanenavong S."/>
            <person name="Wan K.H."/>
            <person name="Yu C."/>
            <person name="Lewis S.E."/>
            <person name="Rubin G.M."/>
            <person name="Celniker S.E."/>
        </authorList>
    </citation>
    <scope>NUCLEOTIDE SEQUENCE [LARGE SCALE MRNA]</scope>
    <scope>RNA EDITING OF POSITION 129</scope>
    <source>
        <strain evidence="15">Berkeley</strain>
        <tissue>Head</tissue>
    </source>
</reference>
<reference evidence="12" key="6">
    <citation type="journal article" date="2006" name="RNA">
        <title>RNA editing in Drosophila melanogaster: new targets and functional consequences.</title>
        <authorList>
            <person name="Stapleton M."/>
            <person name="Carlson J.W."/>
            <person name="Celniker S.E."/>
        </authorList>
    </citation>
    <scope>RNA EDITING OF POSITIONS 129 AND 137</scope>
</reference>
<reference key="7">
    <citation type="journal article" date="2008" name="J. Proteome Res.">
        <title>Phosphoproteome analysis of Drosophila melanogaster embryos.</title>
        <authorList>
            <person name="Zhai B."/>
            <person name="Villen J."/>
            <person name="Beausoleil S.A."/>
            <person name="Mintseris J."/>
            <person name="Gygi S.P."/>
        </authorList>
    </citation>
    <scope>PHOSPHORYLATION [LARGE SCALE ANALYSIS] AT SER-285; SER-289 AND SER-293</scope>
    <scope>IDENTIFICATION BY MASS SPECTROMETRY</scope>
    <source>
        <tissue>Embryo</tissue>
    </source>
</reference>
<dbReference type="EMBL" id="AF426170">
    <property type="protein sequence ID" value="AAL24818.1"/>
    <property type="molecule type" value="mRNA"/>
</dbReference>
<dbReference type="EMBL" id="AJ437141">
    <property type="protein sequence ID" value="CAD24682.1"/>
    <property type="molecule type" value="mRNA"/>
</dbReference>
<dbReference type="EMBL" id="AE014297">
    <property type="protein sequence ID" value="AAF55606.2"/>
    <property type="molecule type" value="Genomic_DNA"/>
</dbReference>
<dbReference type="EMBL" id="BT003300">
    <property type="protein sequence ID" value="AAO25060.1"/>
    <property type="molecule type" value="mRNA"/>
</dbReference>
<dbReference type="RefSeq" id="NP_001262717.1">
    <property type="nucleotide sequence ID" value="NM_001275788.1"/>
</dbReference>
<dbReference type="RefSeq" id="NP_620122.2">
    <property type="nucleotide sequence ID" value="NM_138767.3"/>
</dbReference>
<dbReference type="RefSeq" id="NP_732383.1">
    <property type="nucleotide sequence ID" value="NM_169838.2"/>
</dbReference>
<dbReference type="SMR" id="Q8T390"/>
<dbReference type="BioGRID" id="67269">
    <property type="interactions" value="21"/>
</dbReference>
<dbReference type="FunCoup" id="Q8T390">
    <property type="interactions" value="745"/>
</dbReference>
<dbReference type="IntAct" id="Q8T390">
    <property type="interactions" value="9"/>
</dbReference>
<dbReference type="STRING" id="7227.FBpp0306589"/>
<dbReference type="GlyGen" id="Q8T390">
    <property type="glycosylation" value="1 site"/>
</dbReference>
<dbReference type="iPTMnet" id="Q8T390"/>
<dbReference type="PaxDb" id="7227-FBpp0083112"/>
<dbReference type="DNASU" id="42265"/>
<dbReference type="EnsemblMetazoa" id="FBtr0083698">
    <property type="protein sequence ID" value="FBpp0083112"/>
    <property type="gene ID" value="FBgn0038659"/>
</dbReference>
<dbReference type="EnsemblMetazoa" id="FBtr0083699">
    <property type="protein sequence ID" value="FBpp0083113"/>
    <property type="gene ID" value="FBgn0038659"/>
</dbReference>
<dbReference type="EnsemblMetazoa" id="FBtr0334522">
    <property type="protein sequence ID" value="FBpp0306589"/>
    <property type="gene ID" value="FBgn0038659"/>
</dbReference>
<dbReference type="GeneID" id="42265"/>
<dbReference type="KEGG" id="dme:Dmel_CG14296"/>
<dbReference type="AGR" id="FB:FBgn0038659"/>
<dbReference type="CTD" id="42265"/>
<dbReference type="FlyBase" id="FBgn0038659">
    <property type="gene designation" value="EndoA"/>
</dbReference>
<dbReference type="VEuPathDB" id="VectorBase:FBgn0038659"/>
<dbReference type="eggNOG" id="KOG1118">
    <property type="taxonomic scope" value="Eukaryota"/>
</dbReference>
<dbReference type="GeneTree" id="ENSGT00940000157398"/>
<dbReference type="HOGENOM" id="CLU_047887_0_0_1"/>
<dbReference type="InParanoid" id="Q8T390"/>
<dbReference type="OMA" id="MFPANYC"/>
<dbReference type="OrthoDB" id="443981at2759"/>
<dbReference type="PhylomeDB" id="Q8T390"/>
<dbReference type="Reactome" id="R-DME-177504">
    <property type="pathway name" value="Retrograde neurotrophin signalling"/>
</dbReference>
<dbReference type="Reactome" id="R-DME-182971">
    <property type="pathway name" value="EGFR downregulation"/>
</dbReference>
<dbReference type="Reactome" id="R-DME-432720">
    <property type="pathway name" value="Lysosome Vesicle Biogenesis"/>
</dbReference>
<dbReference type="Reactome" id="R-DME-432722">
    <property type="pathway name" value="Golgi Associated Vesicle Biogenesis"/>
</dbReference>
<dbReference type="Reactome" id="R-DME-437239">
    <property type="pathway name" value="Recycling pathway of L1"/>
</dbReference>
<dbReference type="Reactome" id="R-DME-8856825">
    <property type="pathway name" value="Cargo recognition for clathrin-mediated endocytosis"/>
</dbReference>
<dbReference type="Reactome" id="R-DME-8856828">
    <property type="pathway name" value="Clathrin-mediated endocytosis"/>
</dbReference>
<dbReference type="SignaLink" id="Q8T390"/>
<dbReference type="BioGRID-ORCS" id="42265">
    <property type="hits" value="0 hits in 3 CRISPR screens"/>
</dbReference>
<dbReference type="GenomeRNAi" id="42265"/>
<dbReference type="PRO" id="PR:Q8T390"/>
<dbReference type="Proteomes" id="UP000000803">
    <property type="component" value="Chromosome 3R"/>
</dbReference>
<dbReference type="Bgee" id="FBgn0038659">
    <property type="expression patterns" value="Expressed in lamina monopolar neuron L5 (Drosophila) in insect head and 280 other cell types or tissues"/>
</dbReference>
<dbReference type="ExpressionAtlas" id="Q8T390">
    <property type="expression patterns" value="baseline and differential"/>
</dbReference>
<dbReference type="GO" id="GO:0005829">
    <property type="term" value="C:cytosol"/>
    <property type="evidence" value="ECO:0000314"/>
    <property type="project" value="FlyBase"/>
</dbReference>
<dbReference type="GO" id="GO:0098978">
    <property type="term" value="C:glutamatergic synapse"/>
    <property type="evidence" value="ECO:0000318"/>
    <property type="project" value="GO_Central"/>
</dbReference>
<dbReference type="GO" id="GO:0016020">
    <property type="term" value="C:membrane"/>
    <property type="evidence" value="ECO:0000314"/>
    <property type="project" value="FlyBase"/>
</dbReference>
<dbReference type="GO" id="GO:0098793">
    <property type="term" value="C:presynapse"/>
    <property type="evidence" value="ECO:0000318"/>
    <property type="project" value="GO_Central"/>
</dbReference>
<dbReference type="GO" id="GO:0061174">
    <property type="term" value="C:type I terminal bouton"/>
    <property type="evidence" value="ECO:0000314"/>
    <property type="project" value="FlyBase"/>
</dbReference>
<dbReference type="GO" id="GO:0005543">
    <property type="term" value="F:phospholipid binding"/>
    <property type="evidence" value="ECO:0000314"/>
    <property type="project" value="FlyBase"/>
</dbReference>
<dbReference type="GO" id="GO:0000045">
    <property type="term" value="P:autophagosome assembly"/>
    <property type="evidence" value="ECO:0000315"/>
    <property type="project" value="FlyBase"/>
</dbReference>
<dbReference type="GO" id="GO:0009267">
    <property type="term" value="P:cellular response to starvation"/>
    <property type="evidence" value="ECO:0000315"/>
    <property type="project" value="FlyBase"/>
</dbReference>
<dbReference type="GO" id="GO:0150007">
    <property type="term" value="P:clathrin-dependent synaptic vesicle endocytosis"/>
    <property type="evidence" value="ECO:0000315"/>
    <property type="project" value="FlyBase"/>
</dbReference>
<dbReference type="GO" id="GO:0006897">
    <property type="term" value="P:endocytosis"/>
    <property type="evidence" value="ECO:0000315"/>
    <property type="project" value="FlyBase"/>
</dbReference>
<dbReference type="GO" id="GO:0097753">
    <property type="term" value="P:membrane bending"/>
    <property type="evidence" value="ECO:0000314"/>
    <property type="project" value="FlyBase"/>
</dbReference>
<dbReference type="GO" id="GO:0097749">
    <property type="term" value="P:membrane tubulation"/>
    <property type="evidence" value="ECO:0000314"/>
    <property type="project" value="FlyBase"/>
</dbReference>
<dbReference type="GO" id="GO:0097320">
    <property type="term" value="P:plasma membrane tubulation"/>
    <property type="evidence" value="ECO:0000314"/>
    <property type="project" value="FlyBase"/>
</dbReference>
<dbReference type="GO" id="GO:0050803">
    <property type="term" value="P:regulation of synapse structure or activity"/>
    <property type="evidence" value="ECO:0000315"/>
    <property type="project" value="FlyBase"/>
</dbReference>
<dbReference type="GO" id="GO:0048488">
    <property type="term" value="P:synaptic vesicle endocytosis"/>
    <property type="evidence" value="ECO:0000315"/>
    <property type="project" value="FlyBase"/>
</dbReference>
<dbReference type="CDD" id="cd07592">
    <property type="entry name" value="BAR_Endophilin_A"/>
    <property type="match status" value="1"/>
</dbReference>
<dbReference type="CDD" id="cd11803">
    <property type="entry name" value="SH3_Endophilin_A"/>
    <property type="match status" value="1"/>
</dbReference>
<dbReference type="FunFam" id="1.20.1270.60:FF:000021">
    <property type="entry name" value="Endophilin-A2 isoform 1"/>
    <property type="match status" value="1"/>
</dbReference>
<dbReference type="FunFam" id="2.30.30.40:FF:000072">
    <property type="entry name" value="Unconventional Myosin IB"/>
    <property type="match status" value="1"/>
</dbReference>
<dbReference type="Gene3D" id="1.20.1270.60">
    <property type="entry name" value="Arfaptin homology (AH) domain/BAR domain"/>
    <property type="match status" value="1"/>
</dbReference>
<dbReference type="Gene3D" id="2.30.30.40">
    <property type="entry name" value="SH3 Domains"/>
    <property type="match status" value="1"/>
</dbReference>
<dbReference type="InterPro" id="IPR027267">
    <property type="entry name" value="AH/BAR_dom_sf"/>
</dbReference>
<dbReference type="InterPro" id="IPR004148">
    <property type="entry name" value="BAR_dom"/>
</dbReference>
<dbReference type="InterPro" id="IPR035824">
    <property type="entry name" value="Endophilin_A_SH3"/>
</dbReference>
<dbReference type="InterPro" id="IPR050384">
    <property type="entry name" value="Endophilin_SH3RF"/>
</dbReference>
<dbReference type="InterPro" id="IPR036028">
    <property type="entry name" value="SH3-like_dom_sf"/>
</dbReference>
<dbReference type="InterPro" id="IPR001452">
    <property type="entry name" value="SH3_domain"/>
</dbReference>
<dbReference type="PANTHER" id="PTHR14167:SF81">
    <property type="entry name" value="ENDOPHILIN-A"/>
    <property type="match status" value="1"/>
</dbReference>
<dbReference type="PANTHER" id="PTHR14167">
    <property type="entry name" value="SH3 DOMAIN-CONTAINING"/>
    <property type="match status" value="1"/>
</dbReference>
<dbReference type="Pfam" id="PF03114">
    <property type="entry name" value="BAR"/>
    <property type="match status" value="1"/>
</dbReference>
<dbReference type="Pfam" id="PF00018">
    <property type="entry name" value="SH3_1"/>
    <property type="match status" value="1"/>
</dbReference>
<dbReference type="PRINTS" id="PR00452">
    <property type="entry name" value="SH3DOMAIN"/>
</dbReference>
<dbReference type="PRINTS" id="PR01887">
    <property type="entry name" value="SPECTRNALPHA"/>
</dbReference>
<dbReference type="SMART" id="SM00721">
    <property type="entry name" value="BAR"/>
    <property type="match status" value="1"/>
</dbReference>
<dbReference type="SMART" id="SM00326">
    <property type="entry name" value="SH3"/>
    <property type="match status" value="1"/>
</dbReference>
<dbReference type="SUPFAM" id="SSF103657">
    <property type="entry name" value="BAR/IMD domain-like"/>
    <property type="match status" value="1"/>
</dbReference>
<dbReference type="SUPFAM" id="SSF50044">
    <property type="entry name" value="SH3-domain"/>
    <property type="match status" value="1"/>
</dbReference>
<dbReference type="PROSITE" id="PS51021">
    <property type="entry name" value="BAR"/>
    <property type="match status" value="1"/>
</dbReference>
<dbReference type="PROSITE" id="PS50002">
    <property type="entry name" value="SH3"/>
    <property type="match status" value="1"/>
</dbReference>
<sequence length="369" mass="41409">MAFAGLKKQINKANQYMTEKMGGAEGTKLDMDFMEMERKTDVTVELVEELQLKTKEFLQPNPTARAKMAAVKGISKLSGQAKSNTYPQPEGLLAECMLTYGKKLGEDNSVFAQALVEFGEALKQMADVKYSLDDNIKQNFLEPLHHMQTKDLKEVMHHRKKLQGRRLDFDCKRRRQAKDDEIRGAEDKFGESLQLAQVGMFNLLENDTEHVSQLVTFAEALYDFHSQCADVLRGLQETLQEKRSEAESRPRNEFVPKTLLDLNLDGGGGGLNEDGTPSHISSSASPLPSPMRSPAKSMAVTPQRQQQPCCQALYDFEPENPGELAFKENDIITLLNRVDDNWFEGAVNGRTGYFPQSYVQVQVPLPNGN</sequence>